<gene>
    <name evidence="1" type="primary">rps8</name>
    <name type="ordered locus">Msed_0106</name>
</gene>
<dbReference type="EMBL" id="CP000682">
    <property type="protein sequence ID" value="ABP94283.1"/>
    <property type="molecule type" value="Genomic_DNA"/>
</dbReference>
<dbReference type="RefSeq" id="WP_011921252.1">
    <property type="nucleotide sequence ID" value="NZ_CP139956.1"/>
</dbReference>
<dbReference type="SMR" id="A4YCY1"/>
<dbReference type="STRING" id="399549.Msed_0106"/>
<dbReference type="KEGG" id="mse:Msed_0106"/>
<dbReference type="eggNOG" id="arCOG04091">
    <property type="taxonomic scope" value="Archaea"/>
</dbReference>
<dbReference type="HOGENOM" id="CLU_098428_1_1_2"/>
<dbReference type="Proteomes" id="UP000000242">
    <property type="component" value="Chromosome"/>
</dbReference>
<dbReference type="GO" id="GO:1990904">
    <property type="term" value="C:ribonucleoprotein complex"/>
    <property type="evidence" value="ECO:0007669"/>
    <property type="project" value="UniProtKB-KW"/>
</dbReference>
<dbReference type="GO" id="GO:0005840">
    <property type="term" value="C:ribosome"/>
    <property type="evidence" value="ECO:0007669"/>
    <property type="project" value="UniProtKB-KW"/>
</dbReference>
<dbReference type="GO" id="GO:0019843">
    <property type="term" value="F:rRNA binding"/>
    <property type="evidence" value="ECO:0007669"/>
    <property type="project" value="UniProtKB-UniRule"/>
</dbReference>
<dbReference type="GO" id="GO:0003735">
    <property type="term" value="F:structural constituent of ribosome"/>
    <property type="evidence" value="ECO:0007669"/>
    <property type="project" value="InterPro"/>
</dbReference>
<dbReference type="GO" id="GO:0006412">
    <property type="term" value="P:translation"/>
    <property type="evidence" value="ECO:0007669"/>
    <property type="project" value="UniProtKB-UniRule"/>
</dbReference>
<dbReference type="FunFam" id="3.30.1370.30:FF:000001">
    <property type="entry name" value="40S ribosomal protein S15a"/>
    <property type="match status" value="1"/>
</dbReference>
<dbReference type="Gene3D" id="3.30.1370.30">
    <property type="match status" value="1"/>
</dbReference>
<dbReference type="Gene3D" id="3.30.1490.10">
    <property type="match status" value="1"/>
</dbReference>
<dbReference type="HAMAP" id="MF_01302_A">
    <property type="entry name" value="Ribosomal_uS8_A"/>
    <property type="match status" value="1"/>
</dbReference>
<dbReference type="InterPro" id="IPR000630">
    <property type="entry name" value="Ribosomal_uS8"/>
</dbReference>
<dbReference type="InterPro" id="IPR047863">
    <property type="entry name" value="Ribosomal_uS8_CS"/>
</dbReference>
<dbReference type="InterPro" id="IPR035987">
    <property type="entry name" value="Ribosomal_uS8_sf"/>
</dbReference>
<dbReference type="NCBIfam" id="NF003115">
    <property type="entry name" value="PRK04034.1"/>
    <property type="match status" value="1"/>
</dbReference>
<dbReference type="PANTHER" id="PTHR11758">
    <property type="entry name" value="40S RIBOSOMAL PROTEIN S15A"/>
    <property type="match status" value="1"/>
</dbReference>
<dbReference type="Pfam" id="PF00410">
    <property type="entry name" value="Ribosomal_S8"/>
    <property type="match status" value="1"/>
</dbReference>
<dbReference type="SUPFAM" id="SSF56047">
    <property type="entry name" value="Ribosomal protein S8"/>
    <property type="match status" value="1"/>
</dbReference>
<dbReference type="PROSITE" id="PS00053">
    <property type="entry name" value="RIBOSOMAL_S8"/>
    <property type="match status" value="1"/>
</dbReference>
<name>RS8_METS5</name>
<feature type="chain" id="PRO_1000073194" description="Small ribosomal subunit protein uS8">
    <location>
        <begin position="1"/>
        <end position="133"/>
    </location>
</feature>
<accession>A4YCY1</accession>
<evidence type="ECO:0000255" key="1">
    <source>
        <dbReference type="HAMAP-Rule" id="MF_01302"/>
    </source>
</evidence>
<evidence type="ECO:0000305" key="2"/>
<organism>
    <name type="scientific">Metallosphaera sedula (strain ATCC 51363 / DSM 5348 / JCM 9185 / NBRC 15509 / TH2)</name>
    <dbReference type="NCBI Taxonomy" id="399549"/>
    <lineage>
        <taxon>Archaea</taxon>
        <taxon>Thermoproteota</taxon>
        <taxon>Thermoprotei</taxon>
        <taxon>Sulfolobales</taxon>
        <taxon>Sulfolobaceae</taxon>
        <taxon>Metallosphaera</taxon>
    </lineage>
</organism>
<reference key="1">
    <citation type="journal article" date="2008" name="Appl. Environ. Microbiol.">
        <title>The genome sequence of the metal-mobilizing, extremely thermoacidophilic archaeon Metallosphaera sedula provides insights into bioleaching-associated metabolism.</title>
        <authorList>
            <person name="Auernik K.S."/>
            <person name="Maezato Y."/>
            <person name="Blum P.H."/>
            <person name="Kelly R.M."/>
        </authorList>
    </citation>
    <scope>NUCLEOTIDE SEQUENCE [LARGE SCALE GENOMIC DNA]</scope>
    <source>
        <strain>ATCC 51363 / DSM 5348 / JCM 9185 / NBRC 15509 / TH2</strain>
    </source>
</reference>
<proteinExistence type="inferred from homology"/>
<sequence length="133" mass="15162">MTVINTLSNALSSLYNNEMRRNKQAIIMPSSKLIVNVLRVMQKEGYVGEFEYIDDGRWGKILVQLMGRINKCGAITPRYSLTYREMISLPDYIRRYLPSKEIGVIIVSTPKGVMTHKEAARQRTGGIVLGYVY</sequence>
<protein>
    <recommendedName>
        <fullName evidence="1">Small ribosomal subunit protein uS8</fullName>
    </recommendedName>
    <alternativeName>
        <fullName evidence="2">30S ribosomal protein S8</fullName>
    </alternativeName>
</protein>
<keyword id="KW-1185">Reference proteome</keyword>
<keyword id="KW-0687">Ribonucleoprotein</keyword>
<keyword id="KW-0689">Ribosomal protein</keyword>
<keyword id="KW-0694">RNA-binding</keyword>
<keyword id="KW-0699">rRNA-binding</keyword>
<comment type="function">
    <text evidence="1">One of the primary rRNA binding proteins, it binds directly to 16S rRNA central domain where it helps coordinate assembly of the platform of the 30S subunit.</text>
</comment>
<comment type="subunit">
    <text evidence="1">Part of the 30S ribosomal subunit.</text>
</comment>
<comment type="similarity">
    <text evidence="1">Belongs to the universal ribosomal protein uS8 family.</text>
</comment>